<organismHost>
    <name type="scientific">Saimiri sciureus</name>
    <name type="common">Common squirrel monkey</name>
    <dbReference type="NCBI Taxonomy" id="9521"/>
</organismHost>
<feature type="chain" id="PRO_0000070253" description="G-protein coupled receptor homolog ECRF3">
    <location>
        <begin position="1"/>
        <end position="321"/>
    </location>
</feature>
<feature type="topological domain" description="Extracellular" evidence="1">
    <location>
        <begin position="1"/>
        <end position="34"/>
    </location>
</feature>
<feature type="transmembrane region" description="Helical; Name=1" evidence="1">
    <location>
        <begin position="35"/>
        <end position="51"/>
    </location>
</feature>
<feature type="topological domain" description="Cytoplasmic" evidence="1">
    <location>
        <begin position="52"/>
        <end position="76"/>
    </location>
</feature>
<feature type="transmembrane region" description="Helical; Name=2" evidence="1">
    <location>
        <begin position="77"/>
        <end position="93"/>
    </location>
</feature>
<feature type="topological domain" description="Extracellular" evidence="1">
    <location>
        <begin position="94"/>
        <end position="124"/>
    </location>
</feature>
<feature type="transmembrane region" description="Helical; Name=3" evidence="1">
    <location>
        <begin position="125"/>
        <end position="141"/>
    </location>
</feature>
<feature type="topological domain" description="Cytoplasmic" evidence="1">
    <location>
        <begin position="142"/>
        <end position="149"/>
    </location>
</feature>
<feature type="transmembrane region" description="Helical; Name=4" evidence="1">
    <location>
        <begin position="150"/>
        <end position="166"/>
    </location>
</feature>
<feature type="topological domain" description="Extracellular" evidence="1">
    <location>
        <begin position="167"/>
        <end position="196"/>
    </location>
</feature>
<feature type="transmembrane region" description="Helical; Name=5" evidence="1">
    <location>
        <begin position="197"/>
        <end position="215"/>
    </location>
</feature>
<feature type="topological domain" description="Cytoplasmic" evidence="1">
    <location>
        <begin position="216"/>
        <end position="234"/>
    </location>
</feature>
<feature type="transmembrane region" description="Helical; Name=6" evidence="1">
    <location>
        <begin position="235"/>
        <end position="251"/>
    </location>
</feature>
<feature type="topological domain" description="Extracellular" evidence="1">
    <location>
        <begin position="252"/>
        <end position="286"/>
    </location>
</feature>
<feature type="transmembrane region" description="Helical; Name=7" evidence="1">
    <location>
        <begin position="287"/>
        <end position="303"/>
    </location>
</feature>
<feature type="topological domain" description="Cytoplasmic" evidence="1">
    <location>
        <begin position="304"/>
        <end position="321"/>
    </location>
</feature>
<feature type="glycosylation site" description="N-linked (GlcNAc...) asparagine; by host" evidence="1">
    <location>
        <position position="14"/>
    </location>
</feature>
<feature type="glycosylation site" description="N-linked (GlcNAc...) asparagine; by host" evidence="1">
    <location>
        <position position="18"/>
    </location>
</feature>
<feature type="glycosylation site" description="N-linked (GlcNAc...) asparagine; by host" evidence="1">
    <location>
        <position position="117"/>
    </location>
</feature>
<dbReference type="EMBL" id="S76368">
    <property type="protein sequence ID" value="AAB21117.1"/>
    <property type="molecule type" value="Genomic_DNA"/>
</dbReference>
<dbReference type="EMBL" id="X64346">
    <property type="protein sequence ID" value="CAA45697.1"/>
    <property type="molecule type" value="Genomic_DNA"/>
</dbReference>
<dbReference type="EMBL" id="M86409">
    <property type="protein sequence ID" value="AAA46150.1"/>
    <property type="molecule type" value="Genomic_DNA"/>
</dbReference>
<dbReference type="RefSeq" id="NP_040276.1">
    <property type="nucleotide sequence ID" value="NC_001350.1"/>
</dbReference>
<dbReference type="SMR" id="Q01035"/>
<dbReference type="GlyCosmos" id="Q01035">
    <property type="glycosylation" value="3 sites, No reported glycans"/>
</dbReference>
<dbReference type="KEGG" id="vg:1682467"/>
<dbReference type="Proteomes" id="UP000000587">
    <property type="component" value="Segment"/>
</dbReference>
<dbReference type="GO" id="GO:0020002">
    <property type="term" value="C:host cell plasma membrane"/>
    <property type="evidence" value="ECO:0007669"/>
    <property type="project" value="UniProtKB-SubCell"/>
</dbReference>
<dbReference type="GO" id="GO:0016020">
    <property type="term" value="C:membrane"/>
    <property type="evidence" value="ECO:0007669"/>
    <property type="project" value="UniProtKB-KW"/>
</dbReference>
<dbReference type="GO" id="GO:0019957">
    <property type="term" value="F:C-C chemokine binding"/>
    <property type="evidence" value="ECO:0007669"/>
    <property type="project" value="TreeGrafter"/>
</dbReference>
<dbReference type="GO" id="GO:0016493">
    <property type="term" value="F:C-C chemokine receptor activity"/>
    <property type="evidence" value="ECO:0007669"/>
    <property type="project" value="TreeGrafter"/>
</dbReference>
<dbReference type="GO" id="GO:0019722">
    <property type="term" value="P:calcium-mediated signaling"/>
    <property type="evidence" value="ECO:0007669"/>
    <property type="project" value="TreeGrafter"/>
</dbReference>
<dbReference type="GO" id="GO:0060326">
    <property type="term" value="P:cell chemotaxis"/>
    <property type="evidence" value="ECO:0007669"/>
    <property type="project" value="TreeGrafter"/>
</dbReference>
<dbReference type="GO" id="GO:0006955">
    <property type="term" value="P:immune response"/>
    <property type="evidence" value="ECO:0007669"/>
    <property type="project" value="TreeGrafter"/>
</dbReference>
<dbReference type="GO" id="GO:0007204">
    <property type="term" value="P:positive regulation of cytosolic calcium ion concentration"/>
    <property type="evidence" value="ECO:0007669"/>
    <property type="project" value="TreeGrafter"/>
</dbReference>
<dbReference type="Gene3D" id="1.20.1070.10">
    <property type="entry name" value="Rhodopsin 7-helix transmembrane proteins"/>
    <property type="match status" value="1"/>
</dbReference>
<dbReference type="InterPro" id="IPR050119">
    <property type="entry name" value="CCR1-9-like"/>
</dbReference>
<dbReference type="InterPro" id="IPR000276">
    <property type="entry name" value="GPCR_Rhodpsn"/>
</dbReference>
<dbReference type="InterPro" id="IPR017452">
    <property type="entry name" value="GPCR_Rhodpsn_7TM"/>
</dbReference>
<dbReference type="PANTHER" id="PTHR10489:SF689">
    <property type="entry name" value="C-X-C CHEMOKINE RECEPTOR TYPE 2"/>
    <property type="match status" value="1"/>
</dbReference>
<dbReference type="PANTHER" id="PTHR10489">
    <property type="entry name" value="CELL ADHESION MOLECULE"/>
    <property type="match status" value="1"/>
</dbReference>
<dbReference type="Pfam" id="PF00001">
    <property type="entry name" value="7tm_1"/>
    <property type="match status" value="1"/>
</dbReference>
<dbReference type="PRINTS" id="PR00237">
    <property type="entry name" value="GPCRRHODOPSN"/>
</dbReference>
<dbReference type="SUPFAM" id="SSF81321">
    <property type="entry name" value="Family A G protein-coupled receptor-like"/>
    <property type="match status" value="1"/>
</dbReference>
<dbReference type="PROSITE" id="PS50262">
    <property type="entry name" value="G_PROTEIN_RECEP_F1_2"/>
    <property type="match status" value="1"/>
</dbReference>
<reference key="1">
    <citation type="journal article" date="1992" name="J. Virol.">
        <title>Primary structure of the herpesvirus saimiri genome.</title>
        <authorList>
            <person name="Albrecht J.-C."/>
            <person name="Nicholas J."/>
            <person name="Biller D."/>
            <person name="Cameron K.R."/>
            <person name="Biesinger B."/>
            <person name="Newman C."/>
            <person name="Wittmann S."/>
            <person name="Craxton M.A."/>
            <person name="Coleman H."/>
            <person name="Fleckenstein B."/>
            <person name="Honess R.W."/>
        </authorList>
    </citation>
    <scope>NUCLEOTIDE SEQUENCE [LARGE SCALE GENOMIC DNA]</scope>
</reference>
<reference key="2">
    <citation type="journal article" date="1992" name="Virology">
        <title>Analysis of nucleotide sequence of the rightmost 43 kbp of herpesvirus saimiri (HVS) L-DNA: general conservation of genetic organization between HVS and Epstein-Barr virus.</title>
        <authorList>
            <person name="Nicholas J."/>
            <person name="Cameron K.R."/>
            <person name="Coleman H."/>
            <person name="Newman C."/>
            <person name="Honess R.W."/>
        </authorList>
    </citation>
    <scope>NUCLEOTIDE SEQUENCE [GENOMIC DNA]</scope>
</reference>
<reference key="3">
    <citation type="journal article" date="1992" name="Nature">
        <title>Herpesvirus saimiri encodes homologues of G protein-coupled receptors and cyclins.</title>
        <authorList>
            <person name="Nicholas J."/>
            <person name="Cameron K.R."/>
            <person name="Honess R.W."/>
        </authorList>
    </citation>
    <scope>SIMILARITY TO G-PROTEIN COUPLED RECEPTORS</scope>
</reference>
<accession>Q01035</accession>
<organism>
    <name type="scientific">Saimiriine herpesvirus 2 (strain 11)</name>
    <name type="common">SaHV-2</name>
    <name type="synonym">Herpesvirus saimiri</name>
    <dbReference type="NCBI Taxonomy" id="10383"/>
    <lineage>
        <taxon>Viruses</taxon>
        <taxon>Duplodnaviria</taxon>
        <taxon>Heunggongvirae</taxon>
        <taxon>Peploviricota</taxon>
        <taxon>Herviviricetes</taxon>
        <taxon>Herpesvirales</taxon>
        <taxon>Orthoherpesviridae</taxon>
        <taxon>Gammaherpesvirinae</taxon>
        <taxon>Rhadinovirus</taxon>
        <taxon>Rhadinovirus saimiriinegamma2</taxon>
        <taxon>Saimiriine herpesvirus 2</taxon>
    </lineage>
</organism>
<protein>
    <recommendedName>
        <fullName>G-protein coupled receptor homolog ECRF3</fullName>
    </recommendedName>
</protein>
<proteinExistence type="inferred from homology"/>
<comment type="function">
    <text>May be highly relevant to the process of cellular transformation and rapid T-cell proliferation effected by HVS during latent infections of T-cells in susceptible hosts.</text>
</comment>
<comment type="subcellular location">
    <subcellularLocation>
        <location>Host cell membrane</location>
        <topology>Multi-pass membrane protein</topology>
    </subcellularLocation>
</comment>
<comment type="similarity">
    <text evidence="2">Belongs to the G-protein coupled receptor 1 family.</text>
</comment>
<gene>
    <name type="primary">74</name>
    <name type="synonym">ECRF3</name>
</gene>
<evidence type="ECO:0000255" key="1"/>
<evidence type="ECO:0000255" key="2">
    <source>
        <dbReference type="PROSITE-ProRule" id="PRU00521"/>
    </source>
</evidence>
<sequence length="321" mass="37132">MEVKLDFSSEDFSNYSYNYSGDIYYGDVAPCVVNFLISESALAFIYVLMFLCNAIGNSLVLRTFLKYRAQAQSFDYLMMGFCLNSLFLAGYLLMRLLRMFEIFMNTELCKLEAFFLNLSIYWSPFILVFISVLRCLLIFCATRLWVKKTLIGQVFLCCSFVLACFGALPHVMVTSYYEPSSCIEEDGVLTEQLRTKLNTFHTWYSFAGPLFITVICYSMSCYKLFKTKLSKRAEVVTIITMTTLLFIVFCIPYYIMESIDTLLRVGVIEETCAKRSAIVYGIQCTYMLLVLYYCMLPLMFAMFGSLFRQRMAAWCKTICHC</sequence>
<keyword id="KW-0297">G-protein coupled receptor</keyword>
<keyword id="KW-0325">Glycoprotein</keyword>
<keyword id="KW-1032">Host cell membrane</keyword>
<keyword id="KW-1043">Host membrane</keyword>
<keyword id="KW-0472">Membrane</keyword>
<keyword id="KW-0675">Receptor</keyword>
<keyword id="KW-1185">Reference proteome</keyword>
<keyword id="KW-0807">Transducer</keyword>
<keyword id="KW-0812">Transmembrane</keyword>
<keyword id="KW-1133">Transmembrane helix</keyword>
<name>VG74_SHV21</name>